<protein>
    <recommendedName>
        <fullName evidence="1">Lipoyl synthase</fullName>
        <ecNumber evidence="1">2.8.1.8</ecNumber>
    </recommendedName>
    <alternativeName>
        <fullName evidence="1">Lip-syn</fullName>
        <shortName evidence="1">LS</shortName>
    </alternativeName>
    <alternativeName>
        <fullName evidence="1">Lipoate synthase</fullName>
    </alternativeName>
    <alternativeName>
        <fullName evidence="1">Lipoic acid synthase</fullName>
    </alternativeName>
    <alternativeName>
        <fullName evidence="1">Sulfur insertion protein LipA</fullName>
    </alternativeName>
</protein>
<accession>A5GW06</accession>
<dbReference type="EC" id="2.8.1.8" evidence="1"/>
<dbReference type="EMBL" id="CT978603">
    <property type="protein sequence ID" value="CAK29065.1"/>
    <property type="molecule type" value="Genomic_DNA"/>
</dbReference>
<dbReference type="SMR" id="A5GW06"/>
<dbReference type="STRING" id="316278.SynRCC307_2162"/>
<dbReference type="KEGG" id="syr:SynRCC307_2162"/>
<dbReference type="eggNOG" id="COG0320">
    <property type="taxonomic scope" value="Bacteria"/>
</dbReference>
<dbReference type="HOGENOM" id="CLU_033144_2_1_3"/>
<dbReference type="OrthoDB" id="9787898at2"/>
<dbReference type="UniPathway" id="UPA00538">
    <property type="reaction ID" value="UER00593"/>
</dbReference>
<dbReference type="Proteomes" id="UP000001115">
    <property type="component" value="Chromosome"/>
</dbReference>
<dbReference type="GO" id="GO:0005737">
    <property type="term" value="C:cytoplasm"/>
    <property type="evidence" value="ECO:0007669"/>
    <property type="project" value="UniProtKB-SubCell"/>
</dbReference>
<dbReference type="GO" id="GO:0051539">
    <property type="term" value="F:4 iron, 4 sulfur cluster binding"/>
    <property type="evidence" value="ECO:0007669"/>
    <property type="project" value="UniProtKB-UniRule"/>
</dbReference>
<dbReference type="GO" id="GO:0016992">
    <property type="term" value="F:lipoate synthase activity"/>
    <property type="evidence" value="ECO:0007669"/>
    <property type="project" value="UniProtKB-UniRule"/>
</dbReference>
<dbReference type="GO" id="GO:0046872">
    <property type="term" value="F:metal ion binding"/>
    <property type="evidence" value="ECO:0007669"/>
    <property type="project" value="UniProtKB-KW"/>
</dbReference>
<dbReference type="CDD" id="cd01335">
    <property type="entry name" value="Radical_SAM"/>
    <property type="match status" value="1"/>
</dbReference>
<dbReference type="FunFam" id="3.20.20.70:FF:000040">
    <property type="entry name" value="Lipoyl synthase"/>
    <property type="match status" value="1"/>
</dbReference>
<dbReference type="Gene3D" id="3.20.20.70">
    <property type="entry name" value="Aldolase class I"/>
    <property type="match status" value="1"/>
</dbReference>
<dbReference type="HAMAP" id="MF_00206">
    <property type="entry name" value="Lipoyl_synth"/>
    <property type="match status" value="1"/>
</dbReference>
<dbReference type="InterPro" id="IPR013785">
    <property type="entry name" value="Aldolase_TIM"/>
</dbReference>
<dbReference type="InterPro" id="IPR006638">
    <property type="entry name" value="Elp3/MiaA/NifB-like_rSAM"/>
</dbReference>
<dbReference type="InterPro" id="IPR003698">
    <property type="entry name" value="Lipoyl_synth"/>
</dbReference>
<dbReference type="InterPro" id="IPR007197">
    <property type="entry name" value="rSAM"/>
</dbReference>
<dbReference type="NCBIfam" id="TIGR00510">
    <property type="entry name" value="lipA"/>
    <property type="match status" value="1"/>
</dbReference>
<dbReference type="NCBIfam" id="NF004019">
    <property type="entry name" value="PRK05481.1"/>
    <property type="match status" value="1"/>
</dbReference>
<dbReference type="NCBIfam" id="NF009544">
    <property type="entry name" value="PRK12928.1"/>
    <property type="match status" value="1"/>
</dbReference>
<dbReference type="PANTHER" id="PTHR10949">
    <property type="entry name" value="LIPOYL SYNTHASE"/>
    <property type="match status" value="1"/>
</dbReference>
<dbReference type="PANTHER" id="PTHR10949:SF0">
    <property type="entry name" value="LIPOYL SYNTHASE, MITOCHONDRIAL"/>
    <property type="match status" value="1"/>
</dbReference>
<dbReference type="Pfam" id="PF04055">
    <property type="entry name" value="Radical_SAM"/>
    <property type="match status" value="1"/>
</dbReference>
<dbReference type="PIRSF" id="PIRSF005963">
    <property type="entry name" value="Lipoyl_synth"/>
    <property type="match status" value="1"/>
</dbReference>
<dbReference type="SFLD" id="SFLDF00271">
    <property type="entry name" value="lipoyl_synthase"/>
    <property type="match status" value="1"/>
</dbReference>
<dbReference type="SFLD" id="SFLDS00029">
    <property type="entry name" value="Radical_SAM"/>
    <property type="match status" value="1"/>
</dbReference>
<dbReference type="SMART" id="SM00729">
    <property type="entry name" value="Elp3"/>
    <property type="match status" value="1"/>
</dbReference>
<dbReference type="SUPFAM" id="SSF102114">
    <property type="entry name" value="Radical SAM enzymes"/>
    <property type="match status" value="1"/>
</dbReference>
<dbReference type="PROSITE" id="PS51918">
    <property type="entry name" value="RADICAL_SAM"/>
    <property type="match status" value="1"/>
</dbReference>
<sequence>MQKPEWLRVKAPQRERIGAVADLLLDLKLNTVCQEASCPNIGECFAGGTATFLIMGPGCTRACPYCDIDFDKSVRELDPTEPERLGEATQRLGLKHVVITSVNRDDLADGGASQFVACIEQIRRRSPGTTIELLVPDFCGDWDALAAVMAGAPDVLNHNIETVPRLYKKARPQAIYERSLELLQRVRQGWPRCYSKSGLMVGLGETDAEVIEVLADLRRHAVDIVTIGQYLSPGPKHLPVDRFVSPEQFEQFRSQGESELGFLQVVSTPLTRSSYHAGEVQRLMQEHPR</sequence>
<gene>
    <name evidence="1" type="primary">lipA</name>
    <name type="ordered locus">SynRCC307_2162</name>
</gene>
<keyword id="KW-0004">4Fe-4S</keyword>
<keyword id="KW-0963">Cytoplasm</keyword>
<keyword id="KW-0408">Iron</keyword>
<keyword id="KW-0411">Iron-sulfur</keyword>
<keyword id="KW-0479">Metal-binding</keyword>
<keyword id="KW-1185">Reference proteome</keyword>
<keyword id="KW-0949">S-adenosyl-L-methionine</keyword>
<keyword id="KW-0808">Transferase</keyword>
<reference key="1">
    <citation type="submission" date="2006-05" db="EMBL/GenBank/DDBJ databases">
        <authorList>
            <consortium name="Genoscope"/>
        </authorList>
    </citation>
    <scope>NUCLEOTIDE SEQUENCE [LARGE SCALE GENOMIC DNA]</scope>
    <source>
        <strain>RCC307</strain>
    </source>
</reference>
<feature type="chain" id="PRO_0000325316" description="Lipoyl synthase">
    <location>
        <begin position="1"/>
        <end position="289"/>
    </location>
</feature>
<feature type="domain" description="Radical SAM core" evidence="2">
    <location>
        <begin position="45"/>
        <end position="263"/>
    </location>
</feature>
<feature type="binding site" evidence="1">
    <location>
        <position position="33"/>
    </location>
    <ligand>
        <name>[4Fe-4S] cluster</name>
        <dbReference type="ChEBI" id="CHEBI:49883"/>
        <label>1</label>
    </ligand>
</feature>
<feature type="binding site" evidence="1">
    <location>
        <position position="38"/>
    </location>
    <ligand>
        <name>[4Fe-4S] cluster</name>
        <dbReference type="ChEBI" id="CHEBI:49883"/>
        <label>1</label>
    </ligand>
</feature>
<feature type="binding site" evidence="1">
    <location>
        <position position="44"/>
    </location>
    <ligand>
        <name>[4Fe-4S] cluster</name>
        <dbReference type="ChEBI" id="CHEBI:49883"/>
        <label>1</label>
    </ligand>
</feature>
<feature type="binding site" evidence="1">
    <location>
        <position position="59"/>
    </location>
    <ligand>
        <name>[4Fe-4S] cluster</name>
        <dbReference type="ChEBI" id="CHEBI:49883"/>
        <label>2</label>
        <note>4Fe-4S-S-AdoMet</note>
    </ligand>
</feature>
<feature type="binding site" evidence="1">
    <location>
        <position position="63"/>
    </location>
    <ligand>
        <name>[4Fe-4S] cluster</name>
        <dbReference type="ChEBI" id="CHEBI:49883"/>
        <label>2</label>
        <note>4Fe-4S-S-AdoMet</note>
    </ligand>
</feature>
<feature type="binding site" evidence="1">
    <location>
        <position position="66"/>
    </location>
    <ligand>
        <name>[4Fe-4S] cluster</name>
        <dbReference type="ChEBI" id="CHEBI:49883"/>
        <label>2</label>
        <note>4Fe-4S-S-AdoMet</note>
    </ligand>
</feature>
<feature type="binding site" evidence="1">
    <location>
        <position position="274"/>
    </location>
    <ligand>
        <name>[4Fe-4S] cluster</name>
        <dbReference type="ChEBI" id="CHEBI:49883"/>
        <label>1</label>
    </ligand>
</feature>
<proteinExistence type="inferred from homology"/>
<name>LIPA_SYNR3</name>
<evidence type="ECO:0000255" key="1">
    <source>
        <dbReference type="HAMAP-Rule" id="MF_00206"/>
    </source>
</evidence>
<evidence type="ECO:0000255" key="2">
    <source>
        <dbReference type="PROSITE-ProRule" id="PRU01266"/>
    </source>
</evidence>
<organism>
    <name type="scientific">Synechococcus sp. (strain RCC307)</name>
    <dbReference type="NCBI Taxonomy" id="316278"/>
    <lineage>
        <taxon>Bacteria</taxon>
        <taxon>Bacillati</taxon>
        <taxon>Cyanobacteriota</taxon>
        <taxon>Cyanophyceae</taxon>
        <taxon>Synechococcales</taxon>
        <taxon>Synechococcaceae</taxon>
        <taxon>Synechococcus</taxon>
    </lineage>
</organism>
<comment type="function">
    <text evidence="1">Catalyzes the radical-mediated insertion of two sulfur atoms into the C-6 and C-8 positions of the octanoyl moiety bound to the lipoyl domains of lipoate-dependent enzymes, thereby converting the octanoylated domains into lipoylated derivatives.</text>
</comment>
<comment type="catalytic activity">
    <reaction evidence="1">
        <text>[[Fe-S] cluster scaffold protein carrying a second [4Fe-4S](2+) cluster] + N(6)-octanoyl-L-lysyl-[protein] + 2 oxidized [2Fe-2S]-[ferredoxin] + 2 S-adenosyl-L-methionine + 4 H(+) = [[Fe-S] cluster scaffold protein] + N(6)-[(R)-dihydrolipoyl]-L-lysyl-[protein] + 4 Fe(3+) + 2 hydrogen sulfide + 2 5'-deoxyadenosine + 2 L-methionine + 2 reduced [2Fe-2S]-[ferredoxin]</text>
        <dbReference type="Rhea" id="RHEA:16585"/>
        <dbReference type="Rhea" id="RHEA-COMP:9928"/>
        <dbReference type="Rhea" id="RHEA-COMP:10000"/>
        <dbReference type="Rhea" id="RHEA-COMP:10001"/>
        <dbReference type="Rhea" id="RHEA-COMP:10475"/>
        <dbReference type="Rhea" id="RHEA-COMP:14568"/>
        <dbReference type="Rhea" id="RHEA-COMP:14569"/>
        <dbReference type="ChEBI" id="CHEBI:15378"/>
        <dbReference type="ChEBI" id="CHEBI:17319"/>
        <dbReference type="ChEBI" id="CHEBI:29034"/>
        <dbReference type="ChEBI" id="CHEBI:29919"/>
        <dbReference type="ChEBI" id="CHEBI:33722"/>
        <dbReference type="ChEBI" id="CHEBI:33737"/>
        <dbReference type="ChEBI" id="CHEBI:33738"/>
        <dbReference type="ChEBI" id="CHEBI:57844"/>
        <dbReference type="ChEBI" id="CHEBI:59789"/>
        <dbReference type="ChEBI" id="CHEBI:78809"/>
        <dbReference type="ChEBI" id="CHEBI:83100"/>
        <dbReference type="EC" id="2.8.1.8"/>
    </reaction>
</comment>
<comment type="cofactor">
    <cofactor evidence="1">
        <name>[4Fe-4S] cluster</name>
        <dbReference type="ChEBI" id="CHEBI:49883"/>
    </cofactor>
    <text evidence="1">Binds 2 [4Fe-4S] clusters per subunit. One cluster is coordinated with 3 cysteines and an exchangeable S-adenosyl-L-methionine.</text>
</comment>
<comment type="pathway">
    <text evidence="1">Protein modification; protein lipoylation via endogenous pathway; protein N(6)-(lipoyl)lysine from octanoyl-[acyl-carrier-protein]: step 2/2.</text>
</comment>
<comment type="subcellular location">
    <subcellularLocation>
        <location evidence="1">Cytoplasm</location>
    </subcellularLocation>
</comment>
<comment type="similarity">
    <text evidence="1">Belongs to the radical SAM superfamily. Lipoyl synthase family.</text>
</comment>